<protein>
    <recommendedName>
        <fullName evidence="2">Small ribosomal subunit protein bS6</fullName>
    </recommendedName>
    <alternativeName>
        <fullName>30S ribosomal protein S6</fullName>
    </alternativeName>
</protein>
<name>RS6_CHLPN</name>
<sequence length="112" mass="12961">MGKKENQLYEGAYVFSVTLSEEARRKALDKVISGITNYGGEIHKIHDQGRKKLAYTIRGAREGYYYFIYFSVSPGAITELWKEYHLNEDLLRFMTLRADSVKEVLEFASLPE</sequence>
<reference key="1">
    <citation type="journal article" date="1999" name="Nat. Genet.">
        <title>Comparative genomes of Chlamydia pneumoniae and C. trachomatis.</title>
        <authorList>
            <person name="Kalman S."/>
            <person name="Mitchell W.P."/>
            <person name="Marathe R."/>
            <person name="Lammel C.J."/>
            <person name="Fan J."/>
            <person name="Hyman R.W."/>
            <person name="Olinger L."/>
            <person name="Grimwood J."/>
            <person name="Davis R.W."/>
            <person name="Stephens R.S."/>
        </authorList>
    </citation>
    <scope>NUCLEOTIDE SEQUENCE [LARGE SCALE GENOMIC DNA]</scope>
    <source>
        <strain>CWL029</strain>
    </source>
</reference>
<reference key="2">
    <citation type="journal article" date="2000" name="Nucleic Acids Res.">
        <title>Genome sequences of Chlamydia trachomatis MoPn and Chlamydia pneumoniae AR39.</title>
        <authorList>
            <person name="Read T.D."/>
            <person name="Brunham R.C."/>
            <person name="Shen C."/>
            <person name="Gill S.R."/>
            <person name="Heidelberg J.F."/>
            <person name="White O."/>
            <person name="Hickey E.K."/>
            <person name="Peterson J.D."/>
            <person name="Utterback T.R."/>
            <person name="Berry K.J."/>
            <person name="Bass S."/>
            <person name="Linher K.D."/>
            <person name="Weidman J.F."/>
            <person name="Khouri H.M."/>
            <person name="Craven B."/>
            <person name="Bowman C."/>
            <person name="Dodson R.J."/>
            <person name="Gwinn M.L."/>
            <person name="Nelson W.C."/>
            <person name="DeBoy R.T."/>
            <person name="Kolonay J.F."/>
            <person name="McClarty G."/>
            <person name="Salzberg S.L."/>
            <person name="Eisen J.A."/>
            <person name="Fraser C.M."/>
        </authorList>
    </citation>
    <scope>NUCLEOTIDE SEQUENCE [LARGE SCALE GENOMIC DNA]</scope>
    <source>
        <strain>AR39</strain>
    </source>
</reference>
<reference key="3">
    <citation type="journal article" date="2000" name="Nucleic Acids Res.">
        <title>Comparison of whole genome sequences of Chlamydia pneumoniae J138 from Japan and CWL029 from USA.</title>
        <authorList>
            <person name="Shirai M."/>
            <person name="Hirakawa H."/>
            <person name="Kimoto M."/>
            <person name="Tabuchi M."/>
            <person name="Kishi F."/>
            <person name="Ouchi K."/>
            <person name="Shiba T."/>
            <person name="Ishii K."/>
            <person name="Hattori M."/>
            <person name="Kuhara S."/>
            <person name="Nakazawa T."/>
        </authorList>
    </citation>
    <scope>NUCLEOTIDE SEQUENCE [LARGE SCALE GENOMIC DNA]</scope>
    <source>
        <strain>J138</strain>
    </source>
</reference>
<reference key="4">
    <citation type="submission" date="2002-05" db="EMBL/GenBank/DDBJ databases">
        <title>The genome sequence of Chlamydia pneumoniae TW183 and comparison with other Chlamydia strains based on whole genome sequence analysis.</title>
        <authorList>
            <person name="Geng M.M."/>
            <person name="Schuhmacher A."/>
            <person name="Muehldorfer I."/>
            <person name="Bensch K.W."/>
            <person name="Schaefer K.P."/>
            <person name="Schneider S."/>
            <person name="Pohl T."/>
            <person name="Essig A."/>
            <person name="Marre R."/>
            <person name="Melchers K."/>
        </authorList>
    </citation>
    <scope>NUCLEOTIDE SEQUENCE [LARGE SCALE GENOMIC DNA]</scope>
    <source>
        <strain>TW-183</strain>
    </source>
</reference>
<feature type="chain" id="PRO_0000176751" description="Small ribosomal subunit protein bS6">
    <location>
        <begin position="1"/>
        <end position="112"/>
    </location>
</feature>
<gene>
    <name type="primary">rpsF</name>
    <name type="synonym">rs6</name>
    <name type="ordered locus">CPn_0951</name>
    <name type="ordered locus">CP_0908</name>
    <name type="ordered locus">CpB0988</name>
</gene>
<proteinExistence type="inferred from homology"/>
<dbReference type="EMBL" id="AE001363">
    <property type="protein sequence ID" value="AAD19089.1"/>
    <property type="molecule type" value="Genomic_DNA"/>
</dbReference>
<dbReference type="EMBL" id="AE002161">
    <property type="protein sequence ID" value="AAF38693.1"/>
    <property type="molecule type" value="Genomic_DNA"/>
</dbReference>
<dbReference type="EMBL" id="BA000008">
    <property type="protein sequence ID" value="BAA99159.1"/>
    <property type="molecule type" value="Genomic_DNA"/>
</dbReference>
<dbReference type="EMBL" id="AE009440">
    <property type="protein sequence ID" value="AAP98917.1"/>
    <property type="molecule type" value="Genomic_DNA"/>
</dbReference>
<dbReference type="PIR" id="E86609">
    <property type="entry name" value="E86609"/>
</dbReference>
<dbReference type="PIR" id="F72014">
    <property type="entry name" value="F72014"/>
</dbReference>
<dbReference type="RefSeq" id="NP_225146.1">
    <property type="nucleotide sequence ID" value="NC_000922.1"/>
</dbReference>
<dbReference type="RefSeq" id="WP_010883586.1">
    <property type="nucleotide sequence ID" value="NZ_LN847257.1"/>
</dbReference>
<dbReference type="SMR" id="Q9Z6V5"/>
<dbReference type="STRING" id="406984.CPK_ORF00366"/>
<dbReference type="GeneID" id="45051008"/>
<dbReference type="KEGG" id="cpa:CP_0908"/>
<dbReference type="KEGG" id="cpj:rs6"/>
<dbReference type="KEGG" id="cpn:CPn_0951"/>
<dbReference type="KEGG" id="cpt:CpB0988"/>
<dbReference type="PATRIC" id="fig|115713.3.peg.1041"/>
<dbReference type="eggNOG" id="COG0360">
    <property type="taxonomic scope" value="Bacteria"/>
</dbReference>
<dbReference type="HOGENOM" id="CLU_113441_5_2_0"/>
<dbReference type="OMA" id="YYAHIEF"/>
<dbReference type="OrthoDB" id="9812702at2"/>
<dbReference type="Proteomes" id="UP000000583">
    <property type="component" value="Chromosome"/>
</dbReference>
<dbReference type="Proteomes" id="UP000000801">
    <property type="component" value="Chromosome"/>
</dbReference>
<dbReference type="GO" id="GO:0005737">
    <property type="term" value="C:cytoplasm"/>
    <property type="evidence" value="ECO:0007669"/>
    <property type="project" value="UniProtKB-ARBA"/>
</dbReference>
<dbReference type="GO" id="GO:1990904">
    <property type="term" value="C:ribonucleoprotein complex"/>
    <property type="evidence" value="ECO:0007669"/>
    <property type="project" value="UniProtKB-KW"/>
</dbReference>
<dbReference type="GO" id="GO:0005840">
    <property type="term" value="C:ribosome"/>
    <property type="evidence" value="ECO:0007669"/>
    <property type="project" value="UniProtKB-KW"/>
</dbReference>
<dbReference type="GO" id="GO:0070181">
    <property type="term" value="F:small ribosomal subunit rRNA binding"/>
    <property type="evidence" value="ECO:0007669"/>
    <property type="project" value="TreeGrafter"/>
</dbReference>
<dbReference type="GO" id="GO:0003735">
    <property type="term" value="F:structural constituent of ribosome"/>
    <property type="evidence" value="ECO:0007669"/>
    <property type="project" value="InterPro"/>
</dbReference>
<dbReference type="GO" id="GO:0006412">
    <property type="term" value="P:translation"/>
    <property type="evidence" value="ECO:0007669"/>
    <property type="project" value="UniProtKB-UniRule"/>
</dbReference>
<dbReference type="CDD" id="cd00473">
    <property type="entry name" value="bS6"/>
    <property type="match status" value="1"/>
</dbReference>
<dbReference type="Gene3D" id="3.30.70.60">
    <property type="match status" value="1"/>
</dbReference>
<dbReference type="HAMAP" id="MF_00360">
    <property type="entry name" value="Ribosomal_bS6"/>
    <property type="match status" value="1"/>
</dbReference>
<dbReference type="InterPro" id="IPR000529">
    <property type="entry name" value="Ribosomal_bS6"/>
</dbReference>
<dbReference type="InterPro" id="IPR035980">
    <property type="entry name" value="Ribosomal_bS6_sf"/>
</dbReference>
<dbReference type="InterPro" id="IPR020814">
    <property type="entry name" value="Ribosomal_S6_plastid/chlpt"/>
</dbReference>
<dbReference type="InterPro" id="IPR014717">
    <property type="entry name" value="Transl_elong_EF1B/ribsomal_bS6"/>
</dbReference>
<dbReference type="NCBIfam" id="TIGR00166">
    <property type="entry name" value="S6"/>
    <property type="match status" value="1"/>
</dbReference>
<dbReference type="PANTHER" id="PTHR21011">
    <property type="entry name" value="MITOCHONDRIAL 28S RIBOSOMAL PROTEIN S6"/>
    <property type="match status" value="1"/>
</dbReference>
<dbReference type="PANTHER" id="PTHR21011:SF1">
    <property type="entry name" value="SMALL RIBOSOMAL SUBUNIT PROTEIN BS6M"/>
    <property type="match status" value="1"/>
</dbReference>
<dbReference type="Pfam" id="PF01250">
    <property type="entry name" value="Ribosomal_S6"/>
    <property type="match status" value="1"/>
</dbReference>
<dbReference type="SUPFAM" id="SSF54995">
    <property type="entry name" value="Ribosomal protein S6"/>
    <property type="match status" value="1"/>
</dbReference>
<comment type="function">
    <text evidence="1">Binds together with bS18 to 16S ribosomal RNA.</text>
</comment>
<comment type="similarity">
    <text evidence="2">Belongs to the bacterial ribosomal protein bS6 family.</text>
</comment>
<accession>Q9Z6V5</accession>
<accession>Q9JQ81</accession>
<organism>
    <name type="scientific">Chlamydia pneumoniae</name>
    <name type="common">Chlamydophila pneumoniae</name>
    <dbReference type="NCBI Taxonomy" id="83558"/>
    <lineage>
        <taxon>Bacteria</taxon>
        <taxon>Pseudomonadati</taxon>
        <taxon>Chlamydiota</taxon>
        <taxon>Chlamydiia</taxon>
        <taxon>Chlamydiales</taxon>
        <taxon>Chlamydiaceae</taxon>
        <taxon>Chlamydia/Chlamydophila group</taxon>
        <taxon>Chlamydia</taxon>
    </lineage>
</organism>
<keyword id="KW-0687">Ribonucleoprotein</keyword>
<keyword id="KW-0689">Ribosomal protein</keyword>
<keyword id="KW-0694">RNA-binding</keyword>
<keyword id="KW-0699">rRNA-binding</keyword>
<evidence type="ECO:0000250" key="1"/>
<evidence type="ECO:0000305" key="2"/>